<dbReference type="EMBL" id="X55572">
    <property type="protein sequence ID" value="CAA39158.1"/>
    <property type="molecule type" value="mRNA"/>
</dbReference>
<dbReference type="PIR" id="S12556">
    <property type="entry name" value="A60958"/>
</dbReference>
<dbReference type="RefSeq" id="NP_036909.1">
    <property type="nucleotide sequence ID" value="NM_012777.1"/>
</dbReference>
<dbReference type="SMR" id="P23593"/>
<dbReference type="BioGRID" id="247279">
    <property type="interactions" value="1"/>
</dbReference>
<dbReference type="FunCoup" id="P23593">
    <property type="interactions" value="78"/>
</dbReference>
<dbReference type="STRING" id="10116.ENSRNOP00000064368"/>
<dbReference type="GlyCosmos" id="P23593">
    <property type="glycosylation" value="2 sites, No reported glycans"/>
</dbReference>
<dbReference type="GlyGen" id="P23593">
    <property type="glycosylation" value="2 sites"/>
</dbReference>
<dbReference type="PhosphoSitePlus" id="P23593"/>
<dbReference type="PaxDb" id="10116-ENSRNOP00000064368"/>
<dbReference type="DNASU" id="25239"/>
<dbReference type="GeneID" id="25239"/>
<dbReference type="KEGG" id="rno:25239"/>
<dbReference type="AGR" id="RGD:2137"/>
<dbReference type="CTD" id="347"/>
<dbReference type="RGD" id="2137">
    <property type="gene designation" value="Apod"/>
</dbReference>
<dbReference type="eggNOG" id="KOG4824">
    <property type="taxonomic scope" value="Eukaryota"/>
</dbReference>
<dbReference type="InParanoid" id="P23593"/>
<dbReference type="PhylomeDB" id="P23593"/>
<dbReference type="Reactome" id="R-RNO-804914">
    <property type="pathway name" value="Transport of fatty acids"/>
</dbReference>
<dbReference type="PRO" id="PR:P23593"/>
<dbReference type="Proteomes" id="UP000002494">
    <property type="component" value="Unplaced"/>
</dbReference>
<dbReference type="GO" id="GO:0005737">
    <property type="term" value="C:cytoplasm"/>
    <property type="evidence" value="ECO:0000314"/>
    <property type="project" value="UniProtKB"/>
</dbReference>
<dbReference type="GO" id="GO:0022626">
    <property type="term" value="C:cytosolic ribosome"/>
    <property type="evidence" value="ECO:0000314"/>
    <property type="project" value="RGD"/>
</dbReference>
<dbReference type="GO" id="GO:0030425">
    <property type="term" value="C:dendrite"/>
    <property type="evidence" value="ECO:0000314"/>
    <property type="project" value="RGD"/>
</dbReference>
<dbReference type="GO" id="GO:0005615">
    <property type="term" value="C:extracellular space"/>
    <property type="evidence" value="ECO:0000250"/>
    <property type="project" value="UniProtKB"/>
</dbReference>
<dbReference type="GO" id="GO:0043025">
    <property type="term" value="C:neuronal cell body"/>
    <property type="evidence" value="ECO:0000314"/>
    <property type="project" value="RGD"/>
</dbReference>
<dbReference type="GO" id="GO:0048471">
    <property type="term" value="C:perinuclear region of cytoplasm"/>
    <property type="evidence" value="ECO:0000250"/>
    <property type="project" value="UniProtKB"/>
</dbReference>
<dbReference type="GO" id="GO:0015485">
    <property type="term" value="F:cholesterol binding"/>
    <property type="evidence" value="ECO:0000250"/>
    <property type="project" value="UniProtKB"/>
</dbReference>
<dbReference type="GO" id="GO:0007420">
    <property type="term" value="P:brain development"/>
    <property type="evidence" value="ECO:0007669"/>
    <property type="project" value="InterPro"/>
</dbReference>
<dbReference type="GO" id="GO:0006006">
    <property type="term" value="P:glucose metabolic process"/>
    <property type="evidence" value="ECO:0000250"/>
    <property type="project" value="UniProtKB"/>
</dbReference>
<dbReference type="GO" id="GO:0006629">
    <property type="term" value="P:lipid metabolic process"/>
    <property type="evidence" value="ECO:0000250"/>
    <property type="project" value="UniProtKB"/>
</dbReference>
<dbReference type="GO" id="GO:0006869">
    <property type="term" value="P:lipid transport"/>
    <property type="evidence" value="ECO:0007669"/>
    <property type="project" value="InterPro"/>
</dbReference>
<dbReference type="GO" id="GO:1900016">
    <property type="term" value="P:negative regulation of cytokine production involved in inflammatory response"/>
    <property type="evidence" value="ECO:0000250"/>
    <property type="project" value="UniProtKB"/>
</dbReference>
<dbReference type="GO" id="GO:0051895">
    <property type="term" value="P:negative regulation of focal adhesion assembly"/>
    <property type="evidence" value="ECO:0000250"/>
    <property type="project" value="UniProtKB"/>
</dbReference>
<dbReference type="GO" id="GO:0060588">
    <property type="term" value="P:negative regulation of lipoprotein lipid oxidation"/>
    <property type="evidence" value="ECO:0000250"/>
    <property type="project" value="UniProtKB"/>
</dbReference>
<dbReference type="GO" id="GO:0071638">
    <property type="term" value="P:negative regulation of monocyte chemotactic protein-1 production"/>
    <property type="evidence" value="ECO:0000250"/>
    <property type="project" value="UniProtKB"/>
</dbReference>
<dbReference type="GO" id="GO:0010642">
    <property type="term" value="P:negative regulation of platelet-derived growth factor receptor signaling pathway"/>
    <property type="evidence" value="ECO:0000250"/>
    <property type="project" value="UniProtKB"/>
</dbReference>
<dbReference type="GO" id="GO:0042308">
    <property type="term" value="P:negative regulation of protein import into nucleus"/>
    <property type="evidence" value="ECO:0000250"/>
    <property type="project" value="UniProtKB"/>
</dbReference>
<dbReference type="GO" id="GO:0048662">
    <property type="term" value="P:negative regulation of smooth muscle cell proliferation"/>
    <property type="evidence" value="ECO:0000250"/>
    <property type="project" value="UniProtKB"/>
</dbReference>
<dbReference type="GO" id="GO:2000098">
    <property type="term" value="P:negative regulation of smooth muscle cell-matrix adhesion"/>
    <property type="evidence" value="ECO:0000250"/>
    <property type="project" value="UniProtKB"/>
</dbReference>
<dbReference type="GO" id="GO:2000405">
    <property type="term" value="P:negative regulation of T cell migration"/>
    <property type="evidence" value="ECO:0000250"/>
    <property type="project" value="UniProtKB"/>
</dbReference>
<dbReference type="GO" id="GO:0014012">
    <property type="term" value="P:peripheral nervous system axon regeneration"/>
    <property type="evidence" value="ECO:0000270"/>
    <property type="project" value="RGD"/>
</dbReference>
<dbReference type="GO" id="GO:0048678">
    <property type="term" value="P:response to axon injury"/>
    <property type="evidence" value="ECO:0000270"/>
    <property type="project" value="UniProtKB"/>
</dbReference>
<dbReference type="GO" id="GO:0000302">
    <property type="term" value="P:response to reactive oxygen species"/>
    <property type="evidence" value="ECO:0000250"/>
    <property type="project" value="UniProtKB"/>
</dbReference>
<dbReference type="GO" id="GO:0009410">
    <property type="term" value="P:response to xenobiotic stimulus"/>
    <property type="evidence" value="ECO:0000270"/>
    <property type="project" value="RGD"/>
</dbReference>
<dbReference type="GO" id="GO:0042246">
    <property type="term" value="P:tissue regeneration"/>
    <property type="evidence" value="ECO:0000270"/>
    <property type="project" value="RGD"/>
</dbReference>
<dbReference type="CDD" id="cd19437">
    <property type="entry name" value="lipocalin_apoD-like"/>
    <property type="match status" value="1"/>
</dbReference>
<dbReference type="FunFam" id="2.40.128.20:FF:000003">
    <property type="entry name" value="Apolipoprotein D"/>
    <property type="match status" value="1"/>
</dbReference>
<dbReference type="Gene3D" id="2.40.128.20">
    <property type="match status" value="1"/>
</dbReference>
<dbReference type="InterPro" id="IPR026222">
    <property type="entry name" value="ApoD_vertbrte"/>
</dbReference>
<dbReference type="InterPro" id="IPR002969">
    <property type="entry name" value="ApolipopD"/>
</dbReference>
<dbReference type="InterPro" id="IPR012674">
    <property type="entry name" value="Calycin"/>
</dbReference>
<dbReference type="InterPro" id="IPR022271">
    <property type="entry name" value="Lipocalin_ApoD"/>
</dbReference>
<dbReference type="InterPro" id="IPR022272">
    <property type="entry name" value="Lipocalin_CS"/>
</dbReference>
<dbReference type="InterPro" id="IPR000566">
    <property type="entry name" value="Lipocln_cytosolic_FA-bd_dom"/>
</dbReference>
<dbReference type="PANTHER" id="PTHR10612">
    <property type="entry name" value="APOLIPOPROTEIN D"/>
    <property type="match status" value="1"/>
</dbReference>
<dbReference type="PANTHER" id="PTHR10612:SF34">
    <property type="entry name" value="APOLIPOPROTEIN D"/>
    <property type="match status" value="1"/>
</dbReference>
<dbReference type="Pfam" id="PF08212">
    <property type="entry name" value="Lipocalin_2"/>
    <property type="match status" value="1"/>
</dbReference>
<dbReference type="PIRSF" id="PIRSF036893">
    <property type="entry name" value="Lipocalin_ApoD"/>
    <property type="match status" value="1"/>
</dbReference>
<dbReference type="PRINTS" id="PR02058">
    <property type="entry name" value="APODVERTBRTE"/>
</dbReference>
<dbReference type="PRINTS" id="PR01219">
    <property type="entry name" value="APOLIPOPROTD"/>
</dbReference>
<dbReference type="PRINTS" id="PR00179">
    <property type="entry name" value="LIPOCALIN"/>
</dbReference>
<dbReference type="SUPFAM" id="SSF50814">
    <property type="entry name" value="Lipocalins"/>
    <property type="match status" value="1"/>
</dbReference>
<dbReference type="PROSITE" id="PS00213">
    <property type="entry name" value="LIPOCALIN"/>
    <property type="match status" value="1"/>
</dbReference>
<proteinExistence type="evidence at protein level"/>
<evidence type="ECO:0000250" key="1"/>
<evidence type="ECO:0000250" key="2">
    <source>
        <dbReference type="UniProtKB" id="P05090"/>
    </source>
</evidence>
<evidence type="ECO:0000255" key="3"/>
<evidence type="ECO:0000269" key="4">
    <source>
    </source>
</evidence>
<evidence type="ECO:0000305" key="5"/>
<name>APOD_RAT</name>
<organism>
    <name type="scientific">Rattus norvegicus</name>
    <name type="common">Rat</name>
    <dbReference type="NCBI Taxonomy" id="10116"/>
    <lineage>
        <taxon>Eukaryota</taxon>
        <taxon>Metazoa</taxon>
        <taxon>Chordata</taxon>
        <taxon>Craniata</taxon>
        <taxon>Vertebrata</taxon>
        <taxon>Euteleostomi</taxon>
        <taxon>Mammalia</taxon>
        <taxon>Eutheria</taxon>
        <taxon>Euarchontoglires</taxon>
        <taxon>Glires</taxon>
        <taxon>Rodentia</taxon>
        <taxon>Myomorpha</taxon>
        <taxon>Muroidea</taxon>
        <taxon>Muridae</taxon>
        <taxon>Murinae</taxon>
        <taxon>Rattus</taxon>
    </lineage>
</organism>
<comment type="function">
    <text>APOD occurs in the macromolecular complex with lecithin-transport and binding of bilin. Appears to be able to transport a variety of ligands in a number of different contexts.</text>
</comment>
<comment type="subunit">
    <text>Homodimer.</text>
</comment>
<comment type="subcellular location">
    <subcellularLocation>
        <location>Secreted</location>
    </subcellularLocation>
</comment>
<comment type="tissue specificity">
    <text evidence="4">Expressed in liver, kidney, bladder, adrenal, cerebrum, duodenum, testis, lung, spleen, pancreas, heart and skin.</text>
</comment>
<comment type="similarity">
    <text evidence="5">Belongs to the calycin superfamily. Lipocalin family.</text>
</comment>
<gene>
    <name type="primary">Apod</name>
</gene>
<accession>P23593</accession>
<protein>
    <recommendedName>
        <fullName>Apolipoprotein D</fullName>
        <shortName>Apo-D</shortName>
        <shortName>ApoD</shortName>
    </recommendedName>
</protein>
<sequence length="189" mass="21635">MATMLLLLATLAGLFTTTEGQSFHLGKCPSPPVQENFDVKKYLGRWYEIEKIPVSFEKGNCIQANYSLMENGNIKVLNKELRPDGTLNQVEGEAKQSNMSEPAKLEVQFFSLMPPAPYWILATDYESYALVYSCTTFFWFFHVDYVWILGRNPYLPPETITYLKYILTSNDIDIAKITTKDQANCPDFL</sequence>
<keyword id="KW-0903">Direct protein sequencing</keyword>
<keyword id="KW-1015">Disulfide bond</keyword>
<keyword id="KW-0325">Glycoprotein</keyword>
<keyword id="KW-0446">Lipid-binding</keyword>
<keyword id="KW-0873">Pyrrolidone carboxylic acid</keyword>
<keyword id="KW-1185">Reference proteome</keyword>
<keyword id="KW-0964">Secreted</keyword>
<keyword id="KW-0732">Signal</keyword>
<keyword id="KW-0813">Transport</keyword>
<reference key="1">
    <citation type="journal article" date="1990" name="EMBO J.">
        <title>Regeneration-associated high level expression of apolipoprotein D mRNA in endoneurial fibroblasts of peripheral nerve.</title>
        <authorList>
            <person name="Spreyer P."/>
            <person name="Schaal H."/>
            <person name="Kuhn G."/>
            <person name="Rothe T."/>
            <person name="Unterbeck A."/>
            <person name="Olek K."/>
            <person name="Mueller H.W."/>
        </authorList>
    </citation>
    <scope>NUCLEOTIDE SEQUENCE [MRNA]</scope>
    <source>
        <strain>Wistar</strain>
    </source>
</reference>
<reference key="2">
    <citation type="journal article" date="1990" name="J. Lipid Res.">
        <title>Identification, characterization, and tissue distribution of apolipoprotein D in the rat.</title>
        <authorList>
            <person name="Boyles J.K."/>
            <person name="Notterpek L.M."/>
            <person name="Wardell M.R."/>
            <person name="Rall S.C. Jr."/>
        </authorList>
    </citation>
    <scope>PROTEIN SEQUENCE OF 69-87; 98-132 AND 179-189</scope>
    <scope>TISSUE SPECIFICITY</scope>
</reference>
<reference key="3">
    <citation type="submission" date="2007-09" db="UniProtKB">
        <authorList>
            <person name="Lubec G."/>
            <person name="Kang S.U."/>
            <person name="Lubec S."/>
        </authorList>
    </citation>
    <scope>PROTEIN SEQUENCE OF 28-95 AND 152-176</scope>
    <scope>IDENTIFICATION BY MASS SPECTROMETRY</scope>
    <source>
        <strain>Sprague-Dawley</strain>
        <tissue>Brain</tissue>
    </source>
</reference>
<feature type="signal peptide">
    <location>
        <begin position="1"/>
        <end position="20"/>
    </location>
</feature>
<feature type="chain" id="PRO_0000017876" description="Apolipoprotein D">
    <location>
        <begin position="21"/>
        <end position="189"/>
    </location>
</feature>
<feature type="modified residue" description="Pyrrolidone carboxylic acid" evidence="2">
    <location>
        <position position="21"/>
    </location>
</feature>
<feature type="glycosylation site" description="N-linked (GlcNAc...) asparagine" evidence="3">
    <location>
        <position position="65"/>
    </location>
</feature>
<feature type="glycosylation site" description="N-linked (GlcNAc...) asparagine" evidence="3">
    <location>
        <position position="98"/>
    </location>
</feature>
<feature type="disulfide bond" evidence="1">
    <location>
        <begin position="28"/>
        <end position="134"/>
    </location>
</feature>
<feature type="disulfide bond" evidence="1">
    <location>
        <begin position="61"/>
        <end position="185"/>
    </location>
</feature>
<feature type="sequence conflict" description="In Ref. 2; AA sequence." evidence="5" ref="2">
    <original>K</original>
    <variation>T</variation>
    <location>
        <position position="180"/>
    </location>
</feature>